<feature type="chain" id="PRO_1000194837" description="Phosphoribosylformylglycinamidine synthase subunit PurL">
    <location>
        <begin position="1"/>
        <end position="733"/>
    </location>
</feature>
<feature type="region of interest" description="Disordered" evidence="2">
    <location>
        <begin position="212"/>
        <end position="232"/>
    </location>
</feature>
<feature type="active site" evidence="1">
    <location>
        <position position="41"/>
    </location>
</feature>
<feature type="active site" description="Proton acceptor" evidence="1">
    <location>
        <position position="87"/>
    </location>
</feature>
<feature type="binding site" evidence="1">
    <location>
        <position position="44"/>
    </location>
    <ligand>
        <name>ATP</name>
        <dbReference type="ChEBI" id="CHEBI:30616"/>
    </ligand>
</feature>
<feature type="binding site" evidence="1">
    <location>
        <position position="83"/>
    </location>
    <ligand>
        <name>ATP</name>
        <dbReference type="ChEBI" id="CHEBI:30616"/>
    </ligand>
</feature>
<feature type="binding site" evidence="1">
    <location>
        <position position="85"/>
    </location>
    <ligand>
        <name>Mg(2+)</name>
        <dbReference type="ChEBI" id="CHEBI:18420"/>
        <label>1</label>
    </ligand>
</feature>
<feature type="binding site" evidence="1">
    <location>
        <begin position="86"/>
        <end position="89"/>
    </location>
    <ligand>
        <name>substrate</name>
    </ligand>
</feature>
<feature type="binding site" evidence="1">
    <location>
        <position position="108"/>
    </location>
    <ligand>
        <name>substrate</name>
    </ligand>
</feature>
<feature type="binding site" evidence="1">
    <location>
        <position position="109"/>
    </location>
    <ligand>
        <name>Mg(2+)</name>
        <dbReference type="ChEBI" id="CHEBI:18420"/>
        <label>2</label>
    </ligand>
</feature>
<feature type="binding site" evidence="1">
    <location>
        <position position="232"/>
    </location>
    <ligand>
        <name>substrate</name>
    </ligand>
</feature>
<feature type="binding site" evidence="1">
    <location>
        <position position="260"/>
    </location>
    <ligand>
        <name>Mg(2+)</name>
        <dbReference type="ChEBI" id="CHEBI:18420"/>
        <label>2</label>
    </ligand>
</feature>
<feature type="binding site" evidence="1">
    <location>
        <begin position="304"/>
        <end position="306"/>
    </location>
    <ligand>
        <name>substrate</name>
    </ligand>
</feature>
<feature type="binding site" evidence="1">
    <location>
        <position position="488"/>
    </location>
    <ligand>
        <name>ATP</name>
        <dbReference type="ChEBI" id="CHEBI:30616"/>
    </ligand>
</feature>
<feature type="binding site" evidence="1">
    <location>
        <position position="525"/>
    </location>
    <ligand>
        <name>ATP</name>
        <dbReference type="ChEBI" id="CHEBI:30616"/>
    </ligand>
</feature>
<feature type="binding site" evidence="1">
    <location>
        <position position="526"/>
    </location>
    <ligand>
        <name>Mg(2+)</name>
        <dbReference type="ChEBI" id="CHEBI:18420"/>
        <label>1</label>
    </ligand>
</feature>
<feature type="binding site" evidence="1">
    <location>
        <position position="528"/>
    </location>
    <ligand>
        <name>substrate</name>
    </ligand>
</feature>
<name>PURL_THEPX</name>
<reference key="1">
    <citation type="submission" date="2008-01" db="EMBL/GenBank/DDBJ databases">
        <title>Complete sequence of Thermoanaerobacter sp. X514.</title>
        <authorList>
            <consortium name="US DOE Joint Genome Institute"/>
            <person name="Copeland A."/>
            <person name="Lucas S."/>
            <person name="Lapidus A."/>
            <person name="Barry K."/>
            <person name="Glavina del Rio T."/>
            <person name="Dalin E."/>
            <person name="Tice H."/>
            <person name="Pitluck S."/>
            <person name="Bruce D."/>
            <person name="Goodwin L."/>
            <person name="Saunders E."/>
            <person name="Brettin T."/>
            <person name="Detter J.C."/>
            <person name="Han C."/>
            <person name="Schmutz J."/>
            <person name="Larimer F."/>
            <person name="Land M."/>
            <person name="Hauser L."/>
            <person name="Kyrpides N."/>
            <person name="Kim E."/>
            <person name="Hemme C."/>
            <person name="Fields M.W."/>
            <person name="He Z."/>
            <person name="Zhou J."/>
            <person name="Richardson P."/>
        </authorList>
    </citation>
    <scope>NUCLEOTIDE SEQUENCE [LARGE SCALE GENOMIC DNA]</scope>
    <source>
        <strain>X514</strain>
    </source>
</reference>
<comment type="function">
    <text evidence="1">Part of the phosphoribosylformylglycinamidine synthase complex involved in the purines biosynthetic pathway. Catalyzes the ATP-dependent conversion of formylglycinamide ribonucleotide (FGAR) and glutamine to yield formylglycinamidine ribonucleotide (FGAM) and glutamate. The FGAM synthase complex is composed of three subunits. PurQ produces an ammonia molecule by converting glutamine to glutamate. PurL transfers the ammonia molecule to FGAR to form FGAM in an ATP-dependent manner. PurS interacts with PurQ and PurL and is thought to assist in the transfer of the ammonia molecule from PurQ to PurL.</text>
</comment>
<comment type="catalytic activity">
    <reaction evidence="1">
        <text>N(2)-formyl-N(1)-(5-phospho-beta-D-ribosyl)glycinamide + L-glutamine + ATP + H2O = 2-formamido-N(1)-(5-O-phospho-beta-D-ribosyl)acetamidine + L-glutamate + ADP + phosphate + H(+)</text>
        <dbReference type="Rhea" id="RHEA:17129"/>
        <dbReference type="ChEBI" id="CHEBI:15377"/>
        <dbReference type="ChEBI" id="CHEBI:15378"/>
        <dbReference type="ChEBI" id="CHEBI:29985"/>
        <dbReference type="ChEBI" id="CHEBI:30616"/>
        <dbReference type="ChEBI" id="CHEBI:43474"/>
        <dbReference type="ChEBI" id="CHEBI:58359"/>
        <dbReference type="ChEBI" id="CHEBI:147286"/>
        <dbReference type="ChEBI" id="CHEBI:147287"/>
        <dbReference type="ChEBI" id="CHEBI:456216"/>
        <dbReference type="EC" id="6.3.5.3"/>
    </reaction>
</comment>
<comment type="pathway">
    <text evidence="1">Purine metabolism; IMP biosynthesis via de novo pathway; 5-amino-1-(5-phospho-D-ribosyl)imidazole from N(2)-formyl-N(1)-(5-phospho-D-ribosyl)glycinamide: step 1/2.</text>
</comment>
<comment type="subunit">
    <text evidence="1">Monomer. Part of the FGAM synthase complex composed of 1 PurL, 1 PurQ and 2 PurS subunits.</text>
</comment>
<comment type="subcellular location">
    <subcellularLocation>
        <location evidence="1">Cytoplasm</location>
    </subcellularLocation>
</comment>
<comment type="similarity">
    <text evidence="1">Belongs to the FGAMS family.</text>
</comment>
<proteinExistence type="inferred from homology"/>
<keyword id="KW-0067">ATP-binding</keyword>
<keyword id="KW-0963">Cytoplasm</keyword>
<keyword id="KW-0436">Ligase</keyword>
<keyword id="KW-0460">Magnesium</keyword>
<keyword id="KW-0479">Metal-binding</keyword>
<keyword id="KW-0547">Nucleotide-binding</keyword>
<keyword id="KW-0658">Purine biosynthesis</keyword>
<organism>
    <name type="scientific">Thermoanaerobacter sp. (strain X514)</name>
    <dbReference type="NCBI Taxonomy" id="399726"/>
    <lineage>
        <taxon>Bacteria</taxon>
        <taxon>Bacillati</taxon>
        <taxon>Bacillota</taxon>
        <taxon>Clostridia</taxon>
        <taxon>Thermoanaerobacterales</taxon>
        <taxon>Thermoanaerobacteraceae</taxon>
        <taxon>Thermoanaerobacter</taxon>
    </lineage>
</organism>
<dbReference type="EC" id="6.3.5.3" evidence="1"/>
<dbReference type="EMBL" id="CP000923">
    <property type="protein sequence ID" value="ABY91829.1"/>
    <property type="molecule type" value="Genomic_DNA"/>
</dbReference>
<dbReference type="RefSeq" id="WP_009051716.1">
    <property type="nucleotide sequence ID" value="NC_010320.1"/>
</dbReference>
<dbReference type="SMR" id="B0K3Q4"/>
<dbReference type="KEGG" id="tex:Teth514_0521"/>
<dbReference type="HOGENOM" id="CLU_003100_0_1_9"/>
<dbReference type="UniPathway" id="UPA00074">
    <property type="reaction ID" value="UER00128"/>
</dbReference>
<dbReference type="Proteomes" id="UP000002155">
    <property type="component" value="Chromosome"/>
</dbReference>
<dbReference type="GO" id="GO:0005737">
    <property type="term" value="C:cytoplasm"/>
    <property type="evidence" value="ECO:0007669"/>
    <property type="project" value="UniProtKB-SubCell"/>
</dbReference>
<dbReference type="GO" id="GO:0005524">
    <property type="term" value="F:ATP binding"/>
    <property type="evidence" value="ECO:0007669"/>
    <property type="project" value="UniProtKB-UniRule"/>
</dbReference>
<dbReference type="GO" id="GO:0000287">
    <property type="term" value="F:magnesium ion binding"/>
    <property type="evidence" value="ECO:0007669"/>
    <property type="project" value="UniProtKB-UniRule"/>
</dbReference>
<dbReference type="GO" id="GO:0004642">
    <property type="term" value="F:phosphoribosylformylglycinamidine synthase activity"/>
    <property type="evidence" value="ECO:0007669"/>
    <property type="project" value="UniProtKB-UniRule"/>
</dbReference>
<dbReference type="GO" id="GO:0006189">
    <property type="term" value="P:'de novo' IMP biosynthetic process"/>
    <property type="evidence" value="ECO:0007669"/>
    <property type="project" value="UniProtKB-UniRule"/>
</dbReference>
<dbReference type="CDD" id="cd02203">
    <property type="entry name" value="PurL_repeat1"/>
    <property type="match status" value="1"/>
</dbReference>
<dbReference type="CDD" id="cd02204">
    <property type="entry name" value="PurL_repeat2"/>
    <property type="match status" value="1"/>
</dbReference>
<dbReference type="FunFam" id="3.30.1330.10:FF:000004">
    <property type="entry name" value="Phosphoribosylformylglycinamidine synthase subunit PurL"/>
    <property type="match status" value="1"/>
</dbReference>
<dbReference type="FunFam" id="3.90.650.10:FF:000009">
    <property type="entry name" value="Phosphoribosylformylglycinamidine synthase subunit PurL"/>
    <property type="match status" value="1"/>
</dbReference>
<dbReference type="Gene3D" id="3.90.650.10">
    <property type="entry name" value="PurM-like C-terminal domain"/>
    <property type="match status" value="2"/>
</dbReference>
<dbReference type="Gene3D" id="3.30.1330.10">
    <property type="entry name" value="PurM-like, N-terminal domain"/>
    <property type="match status" value="2"/>
</dbReference>
<dbReference type="HAMAP" id="MF_00420">
    <property type="entry name" value="PurL_2"/>
    <property type="match status" value="1"/>
</dbReference>
<dbReference type="InterPro" id="IPR010074">
    <property type="entry name" value="PRibForGlyAmidine_synth_PurL"/>
</dbReference>
<dbReference type="InterPro" id="IPR041609">
    <property type="entry name" value="PurL_linker"/>
</dbReference>
<dbReference type="InterPro" id="IPR010918">
    <property type="entry name" value="PurM-like_C_dom"/>
</dbReference>
<dbReference type="InterPro" id="IPR036676">
    <property type="entry name" value="PurM-like_C_sf"/>
</dbReference>
<dbReference type="InterPro" id="IPR016188">
    <property type="entry name" value="PurM-like_N"/>
</dbReference>
<dbReference type="InterPro" id="IPR036921">
    <property type="entry name" value="PurM-like_N_sf"/>
</dbReference>
<dbReference type="NCBIfam" id="TIGR01736">
    <property type="entry name" value="FGAM_synth_II"/>
    <property type="match status" value="1"/>
</dbReference>
<dbReference type="NCBIfam" id="NF002290">
    <property type="entry name" value="PRK01213.1"/>
    <property type="match status" value="1"/>
</dbReference>
<dbReference type="PANTHER" id="PTHR43555">
    <property type="entry name" value="PHOSPHORIBOSYLFORMYLGLYCINAMIDINE SYNTHASE SUBUNIT PURL"/>
    <property type="match status" value="1"/>
</dbReference>
<dbReference type="PANTHER" id="PTHR43555:SF1">
    <property type="entry name" value="PHOSPHORIBOSYLFORMYLGLYCINAMIDINE SYNTHASE SUBUNIT PURL"/>
    <property type="match status" value="1"/>
</dbReference>
<dbReference type="Pfam" id="PF00586">
    <property type="entry name" value="AIRS"/>
    <property type="match status" value="2"/>
</dbReference>
<dbReference type="Pfam" id="PF02769">
    <property type="entry name" value="AIRS_C"/>
    <property type="match status" value="2"/>
</dbReference>
<dbReference type="Pfam" id="PF18072">
    <property type="entry name" value="FGAR-AT_linker"/>
    <property type="match status" value="1"/>
</dbReference>
<dbReference type="PIRSF" id="PIRSF001587">
    <property type="entry name" value="FGAM_synthase_II"/>
    <property type="match status" value="1"/>
</dbReference>
<dbReference type="SUPFAM" id="SSF56042">
    <property type="entry name" value="PurM C-terminal domain-like"/>
    <property type="match status" value="2"/>
</dbReference>
<dbReference type="SUPFAM" id="SSF55326">
    <property type="entry name" value="PurM N-terminal domain-like"/>
    <property type="match status" value="2"/>
</dbReference>
<evidence type="ECO:0000255" key="1">
    <source>
        <dbReference type="HAMAP-Rule" id="MF_00420"/>
    </source>
</evidence>
<evidence type="ECO:0000256" key="2">
    <source>
        <dbReference type="SAM" id="MobiDB-lite"/>
    </source>
</evidence>
<protein>
    <recommendedName>
        <fullName evidence="1">Phosphoribosylformylglycinamidine synthase subunit PurL</fullName>
        <shortName evidence="1">FGAM synthase</shortName>
        <ecNumber evidence="1">6.3.5.3</ecNumber>
    </recommendedName>
    <alternativeName>
        <fullName evidence="1">Formylglycinamide ribonucleotide amidotransferase subunit II</fullName>
        <shortName evidence="1">FGAR amidotransferase II</shortName>
        <shortName evidence="1">FGAR-AT II</shortName>
    </alternativeName>
    <alternativeName>
        <fullName evidence="1">Glutamine amidotransferase PurL</fullName>
    </alternativeName>
    <alternativeName>
        <fullName evidence="1">Phosphoribosylformylglycinamidine synthase subunit II</fullName>
    </alternativeName>
</protein>
<accession>B0K3Q4</accession>
<gene>
    <name evidence="1" type="primary">purL</name>
    <name type="ordered locus">Teth514_0521</name>
</gene>
<sequence length="733" mass="80363">MDKIWRELGLTDEEYEKIISILGREPNITEIGMYSVMWSEHCAYKNSKPLLKYLPTKGERVIQGPGENAGVLDIGDNLAVVMKIESHNHPSAIEPYQGAATGVGGIIRDIFTMGARPIALLDSLRFGIPDDKRTKYLIENVVAGIADYGNCIGIPTVGGDTYFEESYKGNPLVNAMCVGIVEKDKIKKGIAKGIGNPVMIVGATTGRDGIGGASFASQELSEESEEKRPSVQVGDPFMEKLLLEACLELFETDAVVAIQDMGAAGLTSSSCEMASRGGVGMEIDLDKVPLREKGMTPYEIMLSESQERMLVVVEKGKEEDVQKVFKKWGLNAATIGKITDDGMIRVIKEGKIVAEVPAKSLAEDAPQYIREEEVPKWQEDVNKLNINEVKPPEDMNKALKDVISSLNVASKEWIYSQYDYMVRTDTAITPGMDAAVVRIKGTKKAIALTTDCNGRYCYLDPYIGSQIAVAEAARNLCMVGAKPIGVTDCLNFGNPEKKEIYWQLKNSIFGIAKACETLQIPVVSGNVSLYNENEEGAIYPTPVIGMAGLIEDVSKICTMDFKKERDVIIILGENKGEIGGSEYLKVCFGMVKGQPPQIDLEEEKRLQELVLKLIEEGLINSSHDISEGGFAAALVESAISGKKGAKISLQTSLREDVELFSESPPRALITVSPEKVEEVLKIAYEYQVPAQKVGVVEGKKIAIEVNGKKIIDLPLEVLEESWRGRIKWEMERN</sequence>